<accession>Q2FJK0</accession>
<keyword id="KW-1003">Cell membrane</keyword>
<keyword id="KW-0449">Lipoprotein</keyword>
<keyword id="KW-0472">Membrane</keyword>
<keyword id="KW-0564">Palmitate</keyword>
<keyword id="KW-0732">Signal</keyword>
<dbReference type="EMBL" id="CP000255">
    <property type="protein sequence ID" value="ABD22425.1"/>
    <property type="molecule type" value="Genomic_DNA"/>
</dbReference>
<dbReference type="SMR" id="Q2FJK0"/>
<dbReference type="KEGG" id="saa:SAUSA300_0415"/>
<dbReference type="HOGENOM" id="CLU_071589_0_1_9"/>
<dbReference type="OMA" id="GKIMRSR"/>
<dbReference type="Proteomes" id="UP000001939">
    <property type="component" value="Chromosome"/>
</dbReference>
<dbReference type="GO" id="GO:0005886">
    <property type="term" value="C:plasma membrane"/>
    <property type="evidence" value="ECO:0007669"/>
    <property type="project" value="UniProtKB-SubCell"/>
</dbReference>
<dbReference type="Gene3D" id="2.50.20.40">
    <property type="match status" value="1"/>
</dbReference>
<dbReference type="InterPro" id="IPR007595">
    <property type="entry name" value="Csa"/>
</dbReference>
<dbReference type="InterPro" id="IPR038641">
    <property type="entry name" value="Csa_sf"/>
</dbReference>
<dbReference type="NCBIfam" id="TIGR01742">
    <property type="entry name" value="SA_tandem_lipo"/>
    <property type="match status" value="1"/>
</dbReference>
<dbReference type="Pfam" id="PF04507">
    <property type="entry name" value="DUF576"/>
    <property type="match status" value="1"/>
</dbReference>
<dbReference type="PROSITE" id="PS51257">
    <property type="entry name" value="PROKAR_LIPOPROTEIN"/>
    <property type="match status" value="1"/>
</dbReference>
<evidence type="ECO:0000255" key="1">
    <source>
        <dbReference type="PROSITE-ProRule" id="PRU00303"/>
    </source>
</evidence>
<evidence type="ECO:0000305" key="2"/>
<comment type="subcellular location">
    <subcellularLocation>
        <location evidence="1">Cell membrane</location>
        <topology evidence="1">Lipid-anchor</topology>
    </subcellularLocation>
</comment>
<comment type="similarity">
    <text evidence="2">Belongs to the staphylococcal tandem lipoprotein family.</text>
</comment>
<feature type="signal peptide" evidence="1">
    <location>
        <begin position="1"/>
        <end position="22"/>
    </location>
</feature>
<feature type="chain" id="PRO_0000282080" description="Uncharacterized lipoprotein SAUSA300_0415">
    <location>
        <begin position="23"/>
        <end position="263"/>
    </location>
</feature>
<feature type="lipid moiety-binding region" description="N-palmitoyl cysteine" evidence="1">
    <location>
        <position position="23"/>
    </location>
</feature>
<feature type="lipid moiety-binding region" description="S-diacylglycerol cysteine" evidence="1">
    <location>
        <position position="23"/>
    </location>
</feature>
<name>Y415_STAA3</name>
<sequence>MEYLKRLALLISVIILTIFIMGCDSQSDTAENPKEGSKEAQIKKSFSKTLDMYPIKNLEDFYGKEGYRDGEFKKDDKGTWLIRSEIVKQPKGKVMKTRGMQLYINRNTETAKGFFVLKEISENNNRVNKDKEEKYEVKMVGNKIIPTEQINDEKIKKEIENFKFFVQYGNFKNFEKYNNGEFSYNPEAPIYSAKYQLHNDDYNVRQLRKRYDISTKETPKLLLKGGGDLKNSSVGQNDIEFTFVERKGENIYFNDSVEFIPSK</sequence>
<organism>
    <name type="scientific">Staphylococcus aureus (strain USA300)</name>
    <dbReference type="NCBI Taxonomy" id="367830"/>
    <lineage>
        <taxon>Bacteria</taxon>
        <taxon>Bacillati</taxon>
        <taxon>Bacillota</taxon>
        <taxon>Bacilli</taxon>
        <taxon>Bacillales</taxon>
        <taxon>Staphylococcaceae</taxon>
        <taxon>Staphylococcus</taxon>
    </lineage>
</organism>
<proteinExistence type="inferred from homology"/>
<gene>
    <name type="primary">lpl3</name>
    <name type="ordered locus">SAUSA300_0415</name>
</gene>
<reference key="1">
    <citation type="journal article" date="2006" name="Lancet">
        <title>Complete genome sequence of USA300, an epidemic clone of community-acquired meticillin-resistant Staphylococcus aureus.</title>
        <authorList>
            <person name="Diep B.A."/>
            <person name="Gill S.R."/>
            <person name="Chang R.F."/>
            <person name="Phan T.H."/>
            <person name="Chen J.H."/>
            <person name="Davidson M.G."/>
            <person name="Lin F."/>
            <person name="Lin J."/>
            <person name="Carleton H.A."/>
            <person name="Mongodin E.F."/>
            <person name="Sensabaugh G.F."/>
            <person name="Perdreau-Remington F."/>
        </authorList>
    </citation>
    <scope>NUCLEOTIDE SEQUENCE [LARGE SCALE GENOMIC DNA]</scope>
    <source>
        <strain>USA300</strain>
    </source>
</reference>
<protein>
    <recommendedName>
        <fullName>Uncharacterized lipoprotein SAUSA300_0415</fullName>
    </recommendedName>
</protein>